<name>RBL_LUPNA</name>
<reference key="1">
    <citation type="journal article" date="1995" name="Bot. Acta">
        <title>Molecular phylogeny of the Papilionoideae (family Leguminosae): rbcL sequences versus chemical taxonomy.</title>
        <authorList>
            <person name="Kaess E."/>
            <person name="Wink M."/>
        </authorList>
    </citation>
    <scope>NUCLEOTIDE SEQUENCE [GENOMIC DNA]</scope>
    <source>
        <tissue>Leaf</tissue>
    </source>
</reference>
<gene>
    <name evidence="1" type="primary">rbcL</name>
</gene>
<sequence length="455" mass="50343">SVGFKAGVKDYKLTYYTPDYKTKDTDILAAFRVTPQPGVPPEEAGAAVAAESSTGTWTTVWTDGLTSLDRYKGRCYHIEPVPGEESQFIAYVAYPLDLFEEGSVTNMFTSIVGNVFGFKALRALRLEDLRIPNAYVKTFQGPPHGIQVERDKLNKYGRPLLGCTIKPKLGLSAKNYGRAVYECLRGGLDFTKDDENVNSQPFMRWRDRFLFCAEALYKAQAETGEIKGHYLNATAGTCEEMIKRAVFARELGVPIVMHDYLTGGFTANTTLSHYCRDNGLLLHIHRAMHAVIDRQKNHGMHFRVLAKALRLSGGDHIHSGTVVGKLEGEREITLGFVDLLRDDFVEKDRSRGIYFTQDWVSLPGVLPVASGGIHVWHMPALTEIFGDDSVLQFGGGTLGHPWGNAPGAVANRVALEACVQARNEGRDLASEGNQIIREASKWSPELAAACEVWKE</sequence>
<dbReference type="EC" id="4.1.1.39" evidence="1"/>
<dbReference type="EMBL" id="Z70056">
    <property type="protein sequence ID" value="CAA93915.1"/>
    <property type="molecule type" value="Genomic_DNA"/>
</dbReference>
<dbReference type="SMR" id="P92407"/>
<dbReference type="GO" id="GO:0009507">
    <property type="term" value="C:chloroplast"/>
    <property type="evidence" value="ECO:0007669"/>
    <property type="project" value="UniProtKB-SubCell"/>
</dbReference>
<dbReference type="GO" id="GO:0000287">
    <property type="term" value="F:magnesium ion binding"/>
    <property type="evidence" value="ECO:0007669"/>
    <property type="project" value="InterPro"/>
</dbReference>
<dbReference type="GO" id="GO:0004497">
    <property type="term" value="F:monooxygenase activity"/>
    <property type="evidence" value="ECO:0007669"/>
    <property type="project" value="UniProtKB-KW"/>
</dbReference>
<dbReference type="GO" id="GO:0016984">
    <property type="term" value="F:ribulose-bisphosphate carboxylase activity"/>
    <property type="evidence" value="ECO:0007669"/>
    <property type="project" value="UniProtKB-EC"/>
</dbReference>
<dbReference type="GO" id="GO:0009853">
    <property type="term" value="P:photorespiration"/>
    <property type="evidence" value="ECO:0007669"/>
    <property type="project" value="UniProtKB-KW"/>
</dbReference>
<dbReference type="GO" id="GO:0019253">
    <property type="term" value="P:reductive pentose-phosphate cycle"/>
    <property type="evidence" value="ECO:0007669"/>
    <property type="project" value="UniProtKB-KW"/>
</dbReference>
<dbReference type="CDD" id="cd08212">
    <property type="entry name" value="RuBisCO_large_I"/>
    <property type="match status" value="1"/>
</dbReference>
<dbReference type="FunFam" id="3.20.20.110:FF:000001">
    <property type="entry name" value="Ribulose bisphosphate carboxylase large chain"/>
    <property type="match status" value="1"/>
</dbReference>
<dbReference type="FunFam" id="3.30.70.150:FF:000001">
    <property type="entry name" value="Ribulose bisphosphate carboxylase large chain"/>
    <property type="match status" value="1"/>
</dbReference>
<dbReference type="Gene3D" id="3.20.20.110">
    <property type="entry name" value="Ribulose bisphosphate carboxylase, large subunit, C-terminal domain"/>
    <property type="match status" value="1"/>
</dbReference>
<dbReference type="Gene3D" id="3.30.70.150">
    <property type="entry name" value="RuBisCO large subunit, N-terminal domain"/>
    <property type="match status" value="1"/>
</dbReference>
<dbReference type="HAMAP" id="MF_01338">
    <property type="entry name" value="RuBisCO_L_type1"/>
    <property type="match status" value="1"/>
</dbReference>
<dbReference type="InterPro" id="IPR033966">
    <property type="entry name" value="RuBisCO"/>
</dbReference>
<dbReference type="InterPro" id="IPR020878">
    <property type="entry name" value="RuBisCo_large_chain_AS"/>
</dbReference>
<dbReference type="InterPro" id="IPR000685">
    <property type="entry name" value="RuBisCO_lsu_C"/>
</dbReference>
<dbReference type="InterPro" id="IPR036376">
    <property type="entry name" value="RuBisCO_lsu_C_sf"/>
</dbReference>
<dbReference type="InterPro" id="IPR017443">
    <property type="entry name" value="RuBisCO_lsu_fd_N"/>
</dbReference>
<dbReference type="InterPro" id="IPR036422">
    <property type="entry name" value="RuBisCO_lsu_N_sf"/>
</dbReference>
<dbReference type="InterPro" id="IPR020888">
    <property type="entry name" value="RuBisCO_lsuI"/>
</dbReference>
<dbReference type="NCBIfam" id="NF003252">
    <property type="entry name" value="PRK04208.1"/>
    <property type="match status" value="1"/>
</dbReference>
<dbReference type="PANTHER" id="PTHR42704">
    <property type="entry name" value="RIBULOSE BISPHOSPHATE CARBOXYLASE"/>
    <property type="match status" value="1"/>
</dbReference>
<dbReference type="PANTHER" id="PTHR42704:SF16">
    <property type="entry name" value="RIBULOSE BISPHOSPHATE CARBOXYLASE LARGE CHAIN"/>
    <property type="match status" value="1"/>
</dbReference>
<dbReference type="Pfam" id="PF00016">
    <property type="entry name" value="RuBisCO_large"/>
    <property type="match status" value="1"/>
</dbReference>
<dbReference type="Pfam" id="PF02788">
    <property type="entry name" value="RuBisCO_large_N"/>
    <property type="match status" value="1"/>
</dbReference>
<dbReference type="SFLD" id="SFLDG01052">
    <property type="entry name" value="RuBisCO"/>
    <property type="match status" value="1"/>
</dbReference>
<dbReference type="SFLD" id="SFLDS00014">
    <property type="entry name" value="RuBisCO"/>
    <property type="match status" value="1"/>
</dbReference>
<dbReference type="SFLD" id="SFLDG00301">
    <property type="entry name" value="RuBisCO-like_proteins"/>
    <property type="match status" value="1"/>
</dbReference>
<dbReference type="SUPFAM" id="SSF51649">
    <property type="entry name" value="RuBisCo, C-terminal domain"/>
    <property type="match status" value="1"/>
</dbReference>
<dbReference type="SUPFAM" id="SSF54966">
    <property type="entry name" value="RuBisCO, large subunit, small (N-terminal) domain"/>
    <property type="match status" value="1"/>
</dbReference>
<dbReference type="PROSITE" id="PS00157">
    <property type="entry name" value="RUBISCO_LARGE"/>
    <property type="match status" value="1"/>
</dbReference>
<proteinExistence type="inferred from homology"/>
<keyword id="KW-0113">Calvin cycle</keyword>
<keyword id="KW-0120">Carbon dioxide fixation</keyword>
<keyword id="KW-0150">Chloroplast</keyword>
<keyword id="KW-1015">Disulfide bond</keyword>
<keyword id="KW-0456">Lyase</keyword>
<keyword id="KW-0460">Magnesium</keyword>
<keyword id="KW-0479">Metal-binding</keyword>
<keyword id="KW-0488">Methylation</keyword>
<keyword id="KW-0503">Monooxygenase</keyword>
<keyword id="KW-0560">Oxidoreductase</keyword>
<keyword id="KW-0601">Photorespiration</keyword>
<keyword id="KW-0602">Photosynthesis</keyword>
<keyword id="KW-0934">Plastid</keyword>
<comment type="function">
    <text evidence="1">RuBisCO catalyzes two reactions: the carboxylation of D-ribulose 1,5-bisphosphate, the primary event in carbon dioxide fixation, as well as the oxidative fragmentation of the pentose substrate in the photorespiration process. Both reactions occur simultaneously and in competition at the same active site.</text>
</comment>
<comment type="catalytic activity">
    <reaction evidence="1">
        <text>2 (2R)-3-phosphoglycerate + 2 H(+) = D-ribulose 1,5-bisphosphate + CO2 + H2O</text>
        <dbReference type="Rhea" id="RHEA:23124"/>
        <dbReference type="ChEBI" id="CHEBI:15377"/>
        <dbReference type="ChEBI" id="CHEBI:15378"/>
        <dbReference type="ChEBI" id="CHEBI:16526"/>
        <dbReference type="ChEBI" id="CHEBI:57870"/>
        <dbReference type="ChEBI" id="CHEBI:58272"/>
        <dbReference type="EC" id="4.1.1.39"/>
    </reaction>
</comment>
<comment type="catalytic activity">
    <reaction evidence="1">
        <text>D-ribulose 1,5-bisphosphate + O2 = 2-phosphoglycolate + (2R)-3-phosphoglycerate + 2 H(+)</text>
        <dbReference type="Rhea" id="RHEA:36631"/>
        <dbReference type="ChEBI" id="CHEBI:15378"/>
        <dbReference type="ChEBI" id="CHEBI:15379"/>
        <dbReference type="ChEBI" id="CHEBI:57870"/>
        <dbReference type="ChEBI" id="CHEBI:58033"/>
        <dbReference type="ChEBI" id="CHEBI:58272"/>
    </reaction>
</comment>
<comment type="cofactor">
    <cofactor evidence="1">
        <name>Mg(2+)</name>
        <dbReference type="ChEBI" id="CHEBI:18420"/>
    </cofactor>
    <text evidence="1">Binds 1 Mg(2+) ion per subunit.</text>
</comment>
<comment type="subunit">
    <text evidence="1">Heterohexadecamer of 8 large chains and 8 small chains; disulfide-linked. The disulfide link is formed within the large subunit homodimers.</text>
</comment>
<comment type="subcellular location">
    <subcellularLocation>
        <location>Plastid</location>
        <location>Chloroplast</location>
    </subcellularLocation>
</comment>
<comment type="PTM">
    <text evidence="1">The disulfide bond which can form in the large chain dimeric partners within the hexadecamer appears to be associated with oxidative stress and protein turnover.</text>
</comment>
<comment type="miscellaneous">
    <text evidence="1">The basic functional RuBisCO is composed of a large chain homodimer in a 'head-to-tail' conformation. In form I RuBisCO this homodimer is arranged in a barrel-like tetramer with the small subunits forming a tetrameric 'cap' on each end of the 'barrel'.</text>
</comment>
<comment type="similarity">
    <text evidence="1">Belongs to the RuBisCO large chain family. Type I subfamily.</text>
</comment>
<accession>P92407</accession>
<evidence type="ECO:0000255" key="1">
    <source>
        <dbReference type="HAMAP-Rule" id="MF_01338"/>
    </source>
</evidence>
<geneLocation type="chloroplast"/>
<feature type="chain" id="PRO_0000062522" description="Ribulose bisphosphate carboxylase large chain">
    <location>
        <begin position="1" status="less than"/>
        <end position="455" status="greater than"/>
    </location>
</feature>
<feature type="active site" description="Proton acceptor" evidence="1">
    <location>
        <position position="166"/>
    </location>
</feature>
<feature type="active site" description="Proton acceptor" evidence="1">
    <location>
        <position position="285"/>
    </location>
</feature>
<feature type="binding site" description="in homodimeric partner" evidence="1">
    <location>
        <position position="114"/>
    </location>
    <ligand>
        <name>substrate</name>
    </ligand>
</feature>
<feature type="binding site" evidence="1">
    <location>
        <position position="164"/>
    </location>
    <ligand>
        <name>substrate</name>
    </ligand>
</feature>
<feature type="binding site" evidence="1">
    <location>
        <position position="168"/>
    </location>
    <ligand>
        <name>substrate</name>
    </ligand>
</feature>
<feature type="binding site" description="via carbamate group" evidence="1">
    <location>
        <position position="192"/>
    </location>
    <ligand>
        <name>Mg(2+)</name>
        <dbReference type="ChEBI" id="CHEBI:18420"/>
    </ligand>
</feature>
<feature type="binding site" evidence="1">
    <location>
        <position position="194"/>
    </location>
    <ligand>
        <name>Mg(2+)</name>
        <dbReference type="ChEBI" id="CHEBI:18420"/>
    </ligand>
</feature>
<feature type="binding site" evidence="1">
    <location>
        <position position="195"/>
    </location>
    <ligand>
        <name>Mg(2+)</name>
        <dbReference type="ChEBI" id="CHEBI:18420"/>
    </ligand>
</feature>
<feature type="binding site" evidence="1">
    <location>
        <position position="286"/>
    </location>
    <ligand>
        <name>substrate</name>
    </ligand>
</feature>
<feature type="binding site" evidence="1">
    <location>
        <position position="318"/>
    </location>
    <ligand>
        <name>substrate</name>
    </ligand>
</feature>
<feature type="binding site" evidence="1">
    <location>
        <position position="370"/>
    </location>
    <ligand>
        <name>substrate</name>
    </ligand>
</feature>
<feature type="site" description="Transition state stabilizer" evidence="1">
    <location>
        <position position="325"/>
    </location>
</feature>
<feature type="modified residue" description="N6,N6,N6-trimethyllysine" evidence="1">
    <location>
        <position position="5"/>
    </location>
</feature>
<feature type="modified residue" description="N6-carboxylysine" evidence="1">
    <location>
        <position position="192"/>
    </location>
</feature>
<feature type="disulfide bond" description="Interchain; in linked form" evidence="1">
    <location>
        <position position="238"/>
    </location>
</feature>
<feature type="non-terminal residue">
    <location>
        <position position="1"/>
    </location>
</feature>
<feature type="non-terminal residue">
    <location>
        <position position="455"/>
    </location>
</feature>
<organism>
    <name type="scientific">Lupinus nanus</name>
    <name type="common">Sky lupine</name>
    <dbReference type="NCBI Taxonomy" id="53233"/>
    <lineage>
        <taxon>Eukaryota</taxon>
        <taxon>Viridiplantae</taxon>
        <taxon>Streptophyta</taxon>
        <taxon>Embryophyta</taxon>
        <taxon>Tracheophyta</taxon>
        <taxon>Spermatophyta</taxon>
        <taxon>Magnoliopsida</taxon>
        <taxon>eudicotyledons</taxon>
        <taxon>Gunneridae</taxon>
        <taxon>Pentapetalae</taxon>
        <taxon>rosids</taxon>
        <taxon>fabids</taxon>
        <taxon>Fabales</taxon>
        <taxon>Fabaceae</taxon>
        <taxon>Papilionoideae</taxon>
        <taxon>50 kb inversion clade</taxon>
        <taxon>genistoids sensu lato</taxon>
        <taxon>core genistoids</taxon>
        <taxon>Genisteae</taxon>
        <taxon>Lupinus</taxon>
    </lineage>
</organism>
<protein>
    <recommendedName>
        <fullName evidence="1">Ribulose bisphosphate carboxylase large chain</fullName>
        <shortName evidence="1">RuBisCO large subunit</shortName>
        <ecNumber evidence="1">4.1.1.39</ecNumber>
    </recommendedName>
</protein>